<keyword id="KW-0067">ATP-binding</keyword>
<keyword id="KW-0418">Kinase</keyword>
<keyword id="KW-0545">Nucleotide biosynthesis</keyword>
<keyword id="KW-0547">Nucleotide-binding</keyword>
<keyword id="KW-0808">Transferase</keyword>
<gene>
    <name evidence="1" type="primary">tmk</name>
    <name type="ordered locus">BCB4264_A0035</name>
</gene>
<accession>B7HIJ8</accession>
<sequence>MKGLFVTIEGPEGSGKTTLIKSLLPYFEQKAQKVMATREPGGIAISEDIRTILHKQEYTMMEARTEALLYAAARRQHLVEKVMPALNEKYLVLCDRFIDSSLAYQGYARGLGMDKVFEINRFATEDCMPSLTIYLDIEPEVGLARIEKDAGREVNRLDMEDISFHKRVREGYLQVVERFSDRIVLVNADQPMEKLIEEVVQIIEDKLL</sequence>
<proteinExistence type="inferred from homology"/>
<reference key="1">
    <citation type="submission" date="2008-10" db="EMBL/GenBank/DDBJ databases">
        <title>Genome sequence of Bacillus cereus B4264.</title>
        <authorList>
            <person name="Dodson R.J."/>
            <person name="Durkin A.S."/>
            <person name="Rosovitz M.J."/>
            <person name="Rasko D.A."/>
            <person name="Hoffmaster A."/>
            <person name="Ravel J."/>
            <person name="Sutton G."/>
        </authorList>
    </citation>
    <scope>NUCLEOTIDE SEQUENCE [LARGE SCALE GENOMIC DNA]</scope>
    <source>
        <strain>B4264</strain>
    </source>
</reference>
<name>KTHY_BACC4</name>
<protein>
    <recommendedName>
        <fullName evidence="1">Thymidylate kinase</fullName>
        <ecNumber evidence="1">2.7.4.9</ecNumber>
    </recommendedName>
    <alternativeName>
        <fullName evidence="1">dTMP kinase</fullName>
    </alternativeName>
</protein>
<evidence type="ECO:0000255" key="1">
    <source>
        <dbReference type="HAMAP-Rule" id="MF_00165"/>
    </source>
</evidence>
<comment type="function">
    <text evidence="1">Phosphorylation of dTMP to form dTDP in both de novo and salvage pathways of dTTP synthesis.</text>
</comment>
<comment type="catalytic activity">
    <reaction evidence="1">
        <text>dTMP + ATP = dTDP + ADP</text>
        <dbReference type="Rhea" id="RHEA:13517"/>
        <dbReference type="ChEBI" id="CHEBI:30616"/>
        <dbReference type="ChEBI" id="CHEBI:58369"/>
        <dbReference type="ChEBI" id="CHEBI:63528"/>
        <dbReference type="ChEBI" id="CHEBI:456216"/>
        <dbReference type="EC" id="2.7.4.9"/>
    </reaction>
</comment>
<comment type="similarity">
    <text evidence="1">Belongs to the thymidylate kinase family.</text>
</comment>
<dbReference type="EC" id="2.7.4.9" evidence="1"/>
<dbReference type="EMBL" id="CP001176">
    <property type="protein sequence ID" value="ACK59022.1"/>
    <property type="molecule type" value="Genomic_DNA"/>
</dbReference>
<dbReference type="RefSeq" id="WP_000677217.1">
    <property type="nucleotide sequence ID" value="NC_011725.1"/>
</dbReference>
<dbReference type="SMR" id="B7HIJ8"/>
<dbReference type="KEGG" id="bcb:BCB4264_A0035"/>
<dbReference type="HOGENOM" id="CLU_049131_0_2_9"/>
<dbReference type="Proteomes" id="UP000007096">
    <property type="component" value="Chromosome"/>
</dbReference>
<dbReference type="GO" id="GO:0005829">
    <property type="term" value="C:cytosol"/>
    <property type="evidence" value="ECO:0007669"/>
    <property type="project" value="TreeGrafter"/>
</dbReference>
<dbReference type="GO" id="GO:0005524">
    <property type="term" value="F:ATP binding"/>
    <property type="evidence" value="ECO:0007669"/>
    <property type="project" value="UniProtKB-UniRule"/>
</dbReference>
<dbReference type="GO" id="GO:0004798">
    <property type="term" value="F:dTMP kinase activity"/>
    <property type="evidence" value="ECO:0007669"/>
    <property type="project" value="UniProtKB-UniRule"/>
</dbReference>
<dbReference type="GO" id="GO:0006233">
    <property type="term" value="P:dTDP biosynthetic process"/>
    <property type="evidence" value="ECO:0007669"/>
    <property type="project" value="InterPro"/>
</dbReference>
<dbReference type="GO" id="GO:0006235">
    <property type="term" value="P:dTTP biosynthetic process"/>
    <property type="evidence" value="ECO:0007669"/>
    <property type="project" value="UniProtKB-UniRule"/>
</dbReference>
<dbReference type="GO" id="GO:0006227">
    <property type="term" value="P:dUDP biosynthetic process"/>
    <property type="evidence" value="ECO:0007669"/>
    <property type="project" value="TreeGrafter"/>
</dbReference>
<dbReference type="CDD" id="cd01672">
    <property type="entry name" value="TMPK"/>
    <property type="match status" value="1"/>
</dbReference>
<dbReference type="FunFam" id="3.40.50.300:FF:000225">
    <property type="entry name" value="Thymidylate kinase"/>
    <property type="match status" value="1"/>
</dbReference>
<dbReference type="Gene3D" id="3.40.50.300">
    <property type="entry name" value="P-loop containing nucleotide triphosphate hydrolases"/>
    <property type="match status" value="1"/>
</dbReference>
<dbReference type="HAMAP" id="MF_00165">
    <property type="entry name" value="Thymidylate_kinase"/>
    <property type="match status" value="1"/>
</dbReference>
<dbReference type="InterPro" id="IPR027417">
    <property type="entry name" value="P-loop_NTPase"/>
</dbReference>
<dbReference type="InterPro" id="IPR039430">
    <property type="entry name" value="Thymidylate_kin-like_dom"/>
</dbReference>
<dbReference type="InterPro" id="IPR018095">
    <property type="entry name" value="Thymidylate_kin_CS"/>
</dbReference>
<dbReference type="InterPro" id="IPR018094">
    <property type="entry name" value="Thymidylate_kinase"/>
</dbReference>
<dbReference type="NCBIfam" id="TIGR00041">
    <property type="entry name" value="DTMP_kinase"/>
    <property type="match status" value="1"/>
</dbReference>
<dbReference type="PANTHER" id="PTHR10344">
    <property type="entry name" value="THYMIDYLATE KINASE"/>
    <property type="match status" value="1"/>
</dbReference>
<dbReference type="PANTHER" id="PTHR10344:SF4">
    <property type="entry name" value="UMP-CMP KINASE 2, MITOCHONDRIAL"/>
    <property type="match status" value="1"/>
</dbReference>
<dbReference type="Pfam" id="PF02223">
    <property type="entry name" value="Thymidylate_kin"/>
    <property type="match status" value="1"/>
</dbReference>
<dbReference type="SUPFAM" id="SSF52540">
    <property type="entry name" value="P-loop containing nucleoside triphosphate hydrolases"/>
    <property type="match status" value="1"/>
</dbReference>
<dbReference type="PROSITE" id="PS01331">
    <property type="entry name" value="THYMIDYLATE_KINASE"/>
    <property type="match status" value="1"/>
</dbReference>
<organism>
    <name type="scientific">Bacillus cereus (strain B4264)</name>
    <dbReference type="NCBI Taxonomy" id="405532"/>
    <lineage>
        <taxon>Bacteria</taxon>
        <taxon>Bacillati</taxon>
        <taxon>Bacillota</taxon>
        <taxon>Bacilli</taxon>
        <taxon>Bacillales</taxon>
        <taxon>Bacillaceae</taxon>
        <taxon>Bacillus</taxon>
        <taxon>Bacillus cereus group</taxon>
    </lineage>
</organism>
<feature type="chain" id="PRO_1000190757" description="Thymidylate kinase">
    <location>
        <begin position="1"/>
        <end position="208"/>
    </location>
</feature>
<feature type="binding site" evidence="1">
    <location>
        <begin position="10"/>
        <end position="17"/>
    </location>
    <ligand>
        <name>ATP</name>
        <dbReference type="ChEBI" id="CHEBI:30616"/>
    </ligand>
</feature>